<accession>Q83QZ0</accession>
<accession>Q7C0Z2</accession>
<reference key="1">
    <citation type="journal article" date="2002" name="Nucleic Acids Res.">
        <title>Genome sequence of Shigella flexneri 2a: insights into pathogenicity through comparison with genomes of Escherichia coli K12 and O157.</title>
        <authorList>
            <person name="Jin Q."/>
            <person name="Yuan Z."/>
            <person name="Xu J."/>
            <person name="Wang Y."/>
            <person name="Shen Y."/>
            <person name="Lu W."/>
            <person name="Wang J."/>
            <person name="Liu H."/>
            <person name="Yang J."/>
            <person name="Yang F."/>
            <person name="Zhang X."/>
            <person name="Zhang J."/>
            <person name="Yang G."/>
            <person name="Wu H."/>
            <person name="Qu D."/>
            <person name="Dong J."/>
            <person name="Sun L."/>
            <person name="Xue Y."/>
            <person name="Zhao A."/>
            <person name="Gao Y."/>
            <person name="Zhu J."/>
            <person name="Kan B."/>
            <person name="Ding K."/>
            <person name="Chen S."/>
            <person name="Cheng H."/>
            <person name="Yao Z."/>
            <person name="He B."/>
            <person name="Chen R."/>
            <person name="Ma D."/>
            <person name="Qiang B."/>
            <person name="Wen Y."/>
            <person name="Hou Y."/>
            <person name="Yu J."/>
        </authorList>
    </citation>
    <scope>NUCLEOTIDE SEQUENCE [LARGE SCALE GENOMIC DNA]</scope>
    <source>
        <strain>301 / Serotype 2a</strain>
    </source>
</reference>
<reference key="2">
    <citation type="journal article" date="2003" name="Infect. Immun.">
        <title>Complete genome sequence and comparative genomics of Shigella flexneri serotype 2a strain 2457T.</title>
        <authorList>
            <person name="Wei J."/>
            <person name="Goldberg M.B."/>
            <person name="Burland V."/>
            <person name="Venkatesan M.M."/>
            <person name="Deng W."/>
            <person name="Fournier G."/>
            <person name="Mayhew G.F."/>
            <person name="Plunkett G. III"/>
            <person name="Rose D.J."/>
            <person name="Darling A."/>
            <person name="Mau B."/>
            <person name="Perna N.T."/>
            <person name="Payne S.M."/>
            <person name="Runyen-Janecky L.J."/>
            <person name="Zhou S."/>
            <person name="Schwartz D.C."/>
            <person name="Blattner F.R."/>
        </authorList>
    </citation>
    <scope>NUCLEOTIDE SEQUENCE [LARGE SCALE GENOMIC DNA]</scope>
    <source>
        <strain>ATCC 700930 / 2457T / Serotype 2a</strain>
    </source>
</reference>
<proteinExistence type="inferred from homology"/>
<comment type="subcellular location">
    <subcellularLocation>
        <location evidence="1">Cell inner membrane</location>
        <topology evidence="1">Multi-pass membrane protein</topology>
    </subcellularLocation>
</comment>
<comment type="similarity">
    <text evidence="1">Belongs to the major facilitator superfamily. TCR/Tet family.</text>
</comment>
<keyword id="KW-0997">Cell inner membrane</keyword>
<keyword id="KW-1003">Cell membrane</keyword>
<keyword id="KW-0472">Membrane</keyword>
<keyword id="KW-1185">Reference proteome</keyword>
<keyword id="KW-0812">Transmembrane</keyword>
<keyword id="KW-1133">Transmembrane helix</keyword>
<keyword id="KW-0813">Transport</keyword>
<dbReference type="EMBL" id="AE005674">
    <property type="protein sequence ID" value="AAN43676.1"/>
    <property type="molecule type" value="Genomic_DNA"/>
</dbReference>
<dbReference type="EMBL" id="AE014073">
    <property type="protein sequence ID" value="AAP17502.1"/>
    <property type="molecule type" value="Genomic_DNA"/>
</dbReference>
<dbReference type="RefSeq" id="WP_000130872.1">
    <property type="nucleotide sequence ID" value="NZ_WPGW01000038.1"/>
</dbReference>
<dbReference type="SMR" id="Q83QZ0"/>
<dbReference type="STRING" id="198214.SF2142"/>
<dbReference type="PaxDb" id="198214-SF2142"/>
<dbReference type="KEGG" id="sfl:SF2142"/>
<dbReference type="KEGG" id="sfx:S2267"/>
<dbReference type="PATRIC" id="fig|198214.7.peg.2557"/>
<dbReference type="HOGENOM" id="CLU_000960_28_0_6"/>
<dbReference type="Proteomes" id="UP000001006">
    <property type="component" value="Chromosome"/>
</dbReference>
<dbReference type="Proteomes" id="UP000002673">
    <property type="component" value="Chromosome"/>
</dbReference>
<dbReference type="GO" id="GO:0005886">
    <property type="term" value="C:plasma membrane"/>
    <property type="evidence" value="ECO:0007669"/>
    <property type="project" value="UniProtKB-SubCell"/>
</dbReference>
<dbReference type="GO" id="GO:0022857">
    <property type="term" value="F:transmembrane transporter activity"/>
    <property type="evidence" value="ECO:0007669"/>
    <property type="project" value="UniProtKB-UniRule"/>
</dbReference>
<dbReference type="CDD" id="cd17503">
    <property type="entry name" value="MFS_LmrB_MDR_like"/>
    <property type="match status" value="1"/>
</dbReference>
<dbReference type="FunFam" id="1.20.1250.20:FF:000021">
    <property type="entry name" value="Putative multidrug resistance protein MdtD"/>
    <property type="match status" value="1"/>
</dbReference>
<dbReference type="FunFam" id="1.20.1720.10:FF:000001">
    <property type="entry name" value="Putative multidrug resistance protein MdtD"/>
    <property type="match status" value="1"/>
</dbReference>
<dbReference type="Gene3D" id="1.20.1250.20">
    <property type="entry name" value="MFS general substrate transporter like domains"/>
    <property type="match status" value="1"/>
</dbReference>
<dbReference type="Gene3D" id="1.20.1720.10">
    <property type="entry name" value="Multidrug resistance protein D"/>
    <property type="match status" value="1"/>
</dbReference>
<dbReference type="HAMAP" id="MF_01577">
    <property type="entry name" value="MFS_MdtD"/>
    <property type="match status" value="1"/>
</dbReference>
<dbReference type="InterPro" id="IPR004638">
    <property type="entry name" value="EmrB-like"/>
</dbReference>
<dbReference type="InterPro" id="IPR011701">
    <property type="entry name" value="MFS"/>
</dbReference>
<dbReference type="InterPro" id="IPR020846">
    <property type="entry name" value="MFS_dom"/>
</dbReference>
<dbReference type="InterPro" id="IPR036259">
    <property type="entry name" value="MFS_trans_sf"/>
</dbReference>
<dbReference type="InterPro" id="IPR023721">
    <property type="entry name" value="Multi-R_MdtD"/>
</dbReference>
<dbReference type="NCBIfam" id="TIGR00711">
    <property type="entry name" value="efflux_EmrB"/>
    <property type="match status" value="1"/>
</dbReference>
<dbReference type="NCBIfam" id="NF007799">
    <property type="entry name" value="PRK10504.1"/>
    <property type="match status" value="1"/>
</dbReference>
<dbReference type="PANTHER" id="PTHR42718:SF46">
    <property type="entry name" value="BLR6921 PROTEIN"/>
    <property type="match status" value="1"/>
</dbReference>
<dbReference type="PANTHER" id="PTHR42718">
    <property type="entry name" value="MAJOR FACILITATOR SUPERFAMILY MULTIDRUG TRANSPORTER MFSC"/>
    <property type="match status" value="1"/>
</dbReference>
<dbReference type="Pfam" id="PF07690">
    <property type="entry name" value="MFS_1"/>
    <property type="match status" value="1"/>
</dbReference>
<dbReference type="PRINTS" id="PR01036">
    <property type="entry name" value="TCRTETB"/>
</dbReference>
<dbReference type="SUPFAM" id="SSF103473">
    <property type="entry name" value="MFS general substrate transporter"/>
    <property type="match status" value="1"/>
</dbReference>
<dbReference type="PROSITE" id="PS50850">
    <property type="entry name" value="MFS"/>
    <property type="match status" value="1"/>
</dbReference>
<gene>
    <name evidence="1" type="primary">mdtD</name>
    <name type="ordered locus">SF2142</name>
    <name type="ordered locus">S2267</name>
</gene>
<sequence>MTDLPDSTRWQLWIVAFGFFMQSLDTTIVNTALPSMAQSLGESPLHMHMVIVSYVLTVAVMLPASGWLADKVGVRNIFFTAIVLFTLGSLFCALSGTLNELLLARALQGVGGAMMVPVGRLTVMKIVPREQYMAAMTFVTLPGQVGPLLGPALGGLLVEYASWHWIFLINIPVGIIGAIATLMLMPNYTMQTRRFDLSGFLLLAVGMAVLTLALDGSKGTGLSPLAIAGLVAVGVVALVLYLLHARNNNRALFSLKLFRTRTFSLGLAGSFAGRIGSGMLPFMTPVFLQIGLGFSPFHAGLMMIPMVLGSMGMKRIVVQVVNRFGYRRVLVATTLGLSLVTLLFMTTALLGWYYVLPFVLFLQGMVNSTRFSSMNTLTLKDLPDNLASSGNSLLSMIMQLSMSIGVTIAGLLLGLFGSQHISVDSGTTQTVFMYTWLSMAFIIALPAFIFARVPNDTHQNVAISRRKRSAQ</sequence>
<organism>
    <name type="scientific">Shigella flexneri</name>
    <dbReference type="NCBI Taxonomy" id="623"/>
    <lineage>
        <taxon>Bacteria</taxon>
        <taxon>Pseudomonadati</taxon>
        <taxon>Pseudomonadota</taxon>
        <taxon>Gammaproteobacteria</taxon>
        <taxon>Enterobacterales</taxon>
        <taxon>Enterobacteriaceae</taxon>
        <taxon>Shigella</taxon>
    </lineage>
</organism>
<name>MDTD_SHIFL</name>
<evidence type="ECO:0000255" key="1">
    <source>
        <dbReference type="HAMAP-Rule" id="MF_01577"/>
    </source>
</evidence>
<protein>
    <recommendedName>
        <fullName evidence="1">Putative multidrug resistance protein MdtD</fullName>
    </recommendedName>
</protein>
<feature type="chain" id="PRO_0000268601" description="Putative multidrug resistance protein MdtD">
    <location>
        <begin position="1"/>
        <end position="471"/>
    </location>
</feature>
<feature type="topological domain" description="Periplasmic" evidence="1">
    <location>
        <begin position="1"/>
        <end position="11"/>
    </location>
</feature>
<feature type="transmembrane region" description="Helical" evidence="1">
    <location>
        <begin position="12"/>
        <end position="32"/>
    </location>
</feature>
<feature type="topological domain" description="Cytoplasmic" evidence="1">
    <location>
        <begin position="33"/>
        <end position="48"/>
    </location>
</feature>
<feature type="transmembrane region" description="Helical" evidence="1">
    <location>
        <begin position="49"/>
        <end position="69"/>
    </location>
</feature>
<feature type="topological domain" description="Periplasmic" evidence="1">
    <location>
        <begin position="70"/>
        <end position="76"/>
    </location>
</feature>
<feature type="transmembrane region" description="Helical" evidence="1">
    <location>
        <begin position="77"/>
        <end position="97"/>
    </location>
</feature>
<feature type="topological domain" description="Cytoplasmic" evidence="1">
    <location>
        <begin position="98"/>
        <end position="101"/>
    </location>
</feature>
<feature type="transmembrane region" description="Helical" evidence="1">
    <location>
        <begin position="102"/>
        <end position="124"/>
    </location>
</feature>
<feature type="topological domain" description="Periplasmic" evidence="1">
    <location>
        <begin position="125"/>
        <end position="137"/>
    </location>
</feature>
<feature type="transmembrane region" description="Helical" evidence="1">
    <location>
        <begin position="138"/>
        <end position="158"/>
    </location>
</feature>
<feature type="topological domain" description="Cytoplasmic" evidence="1">
    <location>
        <begin position="159"/>
        <end position="164"/>
    </location>
</feature>
<feature type="transmembrane region" description="Helical" evidence="1">
    <location>
        <begin position="165"/>
        <end position="185"/>
    </location>
</feature>
<feature type="topological domain" description="Periplasmic" evidence="1">
    <location>
        <begin position="186"/>
        <end position="196"/>
    </location>
</feature>
<feature type="transmembrane region" description="Helical" evidence="1">
    <location>
        <begin position="197"/>
        <end position="217"/>
    </location>
</feature>
<feature type="topological domain" description="Cytoplasmic" evidence="1">
    <location>
        <begin position="218"/>
        <end position="224"/>
    </location>
</feature>
<feature type="transmembrane region" description="Helical" evidence="1">
    <location>
        <begin position="225"/>
        <end position="245"/>
    </location>
</feature>
<feature type="topological domain" description="Periplasmic" evidence="1">
    <location>
        <begin position="246"/>
        <end position="262"/>
    </location>
</feature>
<feature type="transmembrane region" description="Helical" evidence="1">
    <location>
        <begin position="263"/>
        <end position="283"/>
    </location>
</feature>
<feature type="topological domain" description="Cytoplasmic" evidence="1">
    <location>
        <begin position="284"/>
        <end position="285"/>
    </location>
</feature>
<feature type="transmembrane region" description="Helical" evidence="1">
    <location>
        <begin position="286"/>
        <end position="306"/>
    </location>
</feature>
<feature type="topological domain" description="Periplasmic" evidence="1">
    <location>
        <begin position="307"/>
        <end position="341"/>
    </location>
</feature>
<feature type="transmembrane region" description="Helical" evidence="1">
    <location>
        <begin position="342"/>
        <end position="362"/>
    </location>
</feature>
<feature type="topological domain" description="Cytoplasmic" evidence="1">
    <location>
        <begin position="363"/>
        <end position="395"/>
    </location>
</feature>
<feature type="transmembrane region" description="Helical" evidence="1">
    <location>
        <begin position="396"/>
        <end position="416"/>
    </location>
</feature>
<feature type="topological domain" description="Periplasmic" evidence="1">
    <location>
        <begin position="417"/>
        <end position="430"/>
    </location>
</feature>
<feature type="transmembrane region" description="Helical" evidence="1">
    <location>
        <begin position="431"/>
        <end position="451"/>
    </location>
</feature>
<feature type="topological domain" description="Cytoplasmic" evidence="1">
    <location>
        <begin position="452"/>
        <end position="471"/>
    </location>
</feature>